<comment type="catalytic activity">
    <reaction evidence="1">
        <text>urea + 2 H2O + H(+) = hydrogencarbonate + 2 NH4(+)</text>
        <dbReference type="Rhea" id="RHEA:20557"/>
        <dbReference type="ChEBI" id="CHEBI:15377"/>
        <dbReference type="ChEBI" id="CHEBI:15378"/>
        <dbReference type="ChEBI" id="CHEBI:16199"/>
        <dbReference type="ChEBI" id="CHEBI:17544"/>
        <dbReference type="ChEBI" id="CHEBI:28938"/>
        <dbReference type="EC" id="3.5.1.5"/>
    </reaction>
</comment>
<comment type="pathway">
    <text evidence="1">Nitrogen metabolism; urea degradation; CO(2) and NH(3) from urea (urease route): step 1/1.</text>
</comment>
<comment type="subunit">
    <text evidence="1">Heterotrimer of UreA (gamma), UreB (beta) and UreC (alpha) subunits. Three heterotrimers associate to form the active enzyme.</text>
</comment>
<comment type="subcellular location">
    <subcellularLocation>
        <location evidence="1">Cytoplasm</location>
    </subcellularLocation>
</comment>
<comment type="similarity">
    <text evidence="1">Belongs to the urease gamma subunit family.</text>
</comment>
<dbReference type="EC" id="3.5.1.5" evidence="1"/>
<dbReference type="EMBL" id="AY363682">
    <property type="protein sequence ID" value="AAR15100.1"/>
    <property type="molecule type" value="Genomic_DNA"/>
</dbReference>
<dbReference type="RefSeq" id="WP_002215288.1">
    <property type="nucleotide sequence ID" value="NZ_UHJA01000001.1"/>
</dbReference>
<dbReference type="SMR" id="Q6UR70"/>
<dbReference type="STRING" id="29484.ERS008455_03386"/>
<dbReference type="OrthoDB" id="9797217at2"/>
<dbReference type="UniPathway" id="UPA00258">
    <property type="reaction ID" value="UER00370"/>
</dbReference>
<dbReference type="GO" id="GO:0005737">
    <property type="term" value="C:cytoplasm"/>
    <property type="evidence" value="ECO:0007669"/>
    <property type="project" value="UniProtKB-SubCell"/>
</dbReference>
<dbReference type="GO" id="GO:0016151">
    <property type="term" value="F:nickel cation binding"/>
    <property type="evidence" value="ECO:0007669"/>
    <property type="project" value="InterPro"/>
</dbReference>
<dbReference type="GO" id="GO:0009039">
    <property type="term" value="F:urease activity"/>
    <property type="evidence" value="ECO:0007669"/>
    <property type="project" value="UniProtKB-UniRule"/>
</dbReference>
<dbReference type="GO" id="GO:0043419">
    <property type="term" value="P:urea catabolic process"/>
    <property type="evidence" value="ECO:0007669"/>
    <property type="project" value="UniProtKB-UniRule"/>
</dbReference>
<dbReference type="CDD" id="cd00390">
    <property type="entry name" value="Urease_gamma"/>
    <property type="match status" value="1"/>
</dbReference>
<dbReference type="Gene3D" id="3.30.280.10">
    <property type="entry name" value="Urease, gamma-like subunit"/>
    <property type="match status" value="1"/>
</dbReference>
<dbReference type="HAMAP" id="MF_00739">
    <property type="entry name" value="Urease_gamma"/>
    <property type="match status" value="1"/>
</dbReference>
<dbReference type="InterPro" id="IPR012010">
    <property type="entry name" value="Urease_gamma"/>
</dbReference>
<dbReference type="InterPro" id="IPR002026">
    <property type="entry name" value="Urease_gamma/gamma-beta_su"/>
</dbReference>
<dbReference type="InterPro" id="IPR036463">
    <property type="entry name" value="Urease_gamma_sf"/>
</dbReference>
<dbReference type="InterPro" id="IPR050069">
    <property type="entry name" value="Urease_subunit"/>
</dbReference>
<dbReference type="NCBIfam" id="NF009712">
    <property type="entry name" value="PRK13241.1"/>
    <property type="match status" value="1"/>
</dbReference>
<dbReference type="NCBIfam" id="TIGR00193">
    <property type="entry name" value="urease_gam"/>
    <property type="match status" value="1"/>
</dbReference>
<dbReference type="PANTHER" id="PTHR33569">
    <property type="entry name" value="UREASE"/>
    <property type="match status" value="1"/>
</dbReference>
<dbReference type="PANTHER" id="PTHR33569:SF1">
    <property type="entry name" value="UREASE"/>
    <property type="match status" value="1"/>
</dbReference>
<dbReference type="Pfam" id="PF00547">
    <property type="entry name" value="Urease_gamma"/>
    <property type="match status" value="1"/>
</dbReference>
<dbReference type="PIRSF" id="PIRSF001223">
    <property type="entry name" value="Urease_gamma"/>
    <property type="match status" value="1"/>
</dbReference>
<dbReference type="SUPFAM" id="SSF54111">
    <property type="entry name" value="Urease, gamma-subunit"/>
    <property type="match status" value="1"/>
</dbReference>
<reference key="1">
    <citation type="submission" date="2003-08" db="EMBL/GenBank/DDBJ databases">
        <title>Yersinia frederiksenii urease gene locus (ureABCEFGD) and urea transporter gene (yut).</title>
        <authorList>
            <person name="Sebbane F."/>
            <person name="Lemaitre N."/>
            <person name="Simonet M."/>
        </authorList>
    </citation>
    <scope>NUCLEOTIDE SEQUENCE [GENOMIC DNA]</scope>
</reference>
<proteinExistence type="inferred from homology"/>
<name>URE3_YERFR</name>
<gene>
    <name evidence="1" type="primary">ureA</name>
</gene>
<protein>
    <recommendedName>
        <fullName evidence="1">Urease subunit gamma</fullName>
        <ecNumber evidence="1">3.5.1.5</ecNumber>
    </recommendedName>
    <alternativeName>
        <fullName evidence="1">Urea amidohydrolase subunit gamma</fullName>
    </alternativeName>
</protein>
<feature type="chain" id="PRO_0000098062" description="Urease subunit gamma">
    <location>
        <begin position="1"/>
        <end position="100"/>
    </location>
</feature>
<sequence length="100" mass="11049">MQLTPREVEKLMIYTLSDVAFKRKARGLKLNYPEAVSIITVTAMEGARDGKSVEDVMKEASKVLTKDDVMDGVADLIPNVQVEAIFTDGSRLVTVHDPIK</sequence>
<evidence type="ECO:0000255" key="1">
    <source>
        <dbReference type="HAMAP-Rule" id="MF_00739"/>
    </source>
</evidence>
<organism>
    <name type="scientific">Yersinia frederiksenii</name>
    <dbReference type="NCBI Taxonomy" id="29484"/>
    <lineage>
        <taxon>Bacteria</taxon>
        <taxon>Pseudomonadati</taxon>
        <taxon>Pseudomonadota</taxon>
        <taxon>Gammaproteobacteria</taxon>
        <taxon>Enterobacterales</taxon>
        <taxon>Yersiniaceae</taxon>
        <taxon>Yersinia</taxon>
    </lineage>
</organism>
<keyword id="KW-0963">Cytoplasm</keyword>
<keyword id="KW-0378">Hydrolase</keyword>
<accession>Q6UR70</accession>